<keyword id="KW-0175">Coiled coil</keyword>
<keyword id="KW-1017">Isopeptide bond</keyword>
<keyword id="KW-0597">Phosphoprotein</keyword>
<keyword id="KW-1185">Reference proteome</keyword>
<keyword id="KW-0832">Ubl conjugation</keyword>
<accession>Q0III0</accession>
<gene>
    <name type="primary">MSANTD3</name>
</gene>
<comment type="similarity">
    <text evidence="3">Belongs to the MSANTD3 family.</text>
</comment>
<reference key="1">
    <citation type="submission" date="2006-08" db="EMBL/GenBank/DDBJ databases">
        <authorList>
            <consortium name="NIH - Mammalian Gene Collection (MGC) project"/>
        </authorList>
    </citation>
    <scope>NUCLEOTIDE SEQUENCE [LARGE SCALE MRNA]</scope>
    <source>
        <strain>Hereford</strain>
        <tissue>Brain cortex</tissue>
    </source>
</reference>
<sequence length="275" mass="32335">MQNNEIIKPAKYFSELEKSILLALVEKYKYVLECKKSDARTIALKQRTWQALAHEYNSQPSVSLRDFKQLKKCWENIKARTKKIMAHERREKVKRSVSPLLSTHVLGKEKIASMLPEQLYFLQSPPEEEPEYHAEAAAQESFAVSNRELCDDEKEFIHFPVCEGTSQPEPSCSAVRITANKNYRSKTSQEGALKKMHEEEHHQQMSILQLQLIQMNEVHVAKIQQIERECEMAEEEHRIKMEVLNKKKMYWERKLQTFTKEWPVSSFNRPFPNSP</sequence>
<proteinExistence type="evidence at transcript level"/>
<protein>
    <recommendedName>
        <fullName>Myb/SANT-like DNA-binding domain-containing protein 3</fullName>
    </recommendedName>
</protein>
<feature type="chain" id="PRO_0000292589" description="Myb/SANT-like DNA-binding domain-containing protein 3">
    <location>
        <begin position="1"/>
        <end position="275"/>
    </location>
</feature>
<feature type="domain" description="Myb-like">
    <location>
        <begin position="13"/>
        <end position="78"/>
    </location>
</feature>
<feature type="coiled-coil region" evidence="2">
    <location>
        <begin position="211"/>
        <end position="247"/>
    </location>
</feature>
<feature type="modified residue" description="Phosphoserine" evidence="1">
    <location>
        <position position="96"/>
    </location>
</feature>
<feature type="modified residue" description="Phosphoserine" evidence="1">
    <location>
        <position position="98"/>
    </location>
</feature>
<feature type="modified residue" description="Phosphoserine" evidence="1">
    <location>
        <position position="274"/>
    </location>
</feature>
<feature type="cross-link" description="Glycyl lysine isopeptide (Lys-Gly) (interchain with G-Cter in SUMO2)" evidence="1">
    <location>
        <position position="154"/>
    </location>
</feature>
<organism>
    <name type="scientific">Bos taurus</name>
    <name type="common">Bovine</name>
    <dbReference type="NCBI Taxonomy" id="9913"/>
    <lineage>
        <taxon>Eukaryota</taxon>
        <taxon>Metazoa</taxon>
        <taxon>Chordata</taxon>
        <taxon>Craniata</taxon>
        <taxon>Vertebrata</taxon>
        <taxon>Euteleostomi</taxon>
        <taxon>Mammalia</taxon>
        <taxon>Eutheria</taxon>
        <taxon>Laurasiatheria</taxon>
        <taxon>Artiodactyla</taxon>
        <taxon>Ruminantia</taxon>
        <taxon>Pecora</taxon>
        <taxon>Bovidae</taxon>
        <taxon>Bovinae</taxon>
        <taxon>Bos</taxon>
    </lineage>
</organism>
<evidence type="ECO:0000250" key="1">
    <source>
        <dbReference type="UniProtKB" id="Q96H12"/>
    </source>
</evidence>
<evidence type="ECO:0000255" key="2"/>
<evidence type="ECO:0000305" key="3"/>
<dbReference type="EMBL" id="BC122633">
    <property type="protein sequence ID" value="AAI22634.1"/>
    <property type="molecule type" value="mRNA"/>
</dbReference>
<dbReference type="RefSeq" id="NP_001069487.1">
    <property type="nucleotide sequence ID" value="NM_001076019.1"/>
</dbReference>
<dbReference type="RefSeq" id="XP_024851603.1">
    <property type="nucleotide sequence ID" value="XM_024995835.2"/>
</dbReference>
<dbReference type="RefSeq" id="XP_024851604.1">
    <property type="nucleotide sequence ID" value="XM_024995836.2"/>
</dbReference>
<dbReference type="RefSeq" id="XP_024851605.1">
    <property type="nucleotide sequence ID" value="XM_024995837.2"/>
</dbReference>
<dbReference type="SMR" id="Q0III0"/>
<dbReference type="FunCoup" id="Q0III0">
    <property type="interactions" value="117"/>
</dbReference>
<dbReference type="STRING" id="9913.ENSBTAP00000067358"/>
<dbReference type="Ensembl" id="ENSBTAT00000078836.1">
    <property type="protein sequence ID" value="ENSBTAP00000060966.1"/>
    <property type="gene ID" value="ENSBTAG00000052146.2"/>
</dbReference>
<dbReference type="GeneID" id="534309"/>
<dbReference type="KEGG" id="bta:534309"/>
<dbReference type="CTD" id="91283"/>
<dbReference type="VEuPathDB" id="HostDB:ENSBTAG00000052146"/>
<dbReference type="VGNC" id="VGNC:31690">
    <property type="gene designation" value="MSANTD3"/>
</dbReference>
<dbReference type="eggNOG" id="ENOG502RFDD">
    <property type="taxonomic scope" value="Eukaryota"/>
</dbReference>
<dbReference type="GeneTree" id="ENSGT00390000007901"/>
<dbReference type="HOGENOM" id="CLU_065066_0_0_1"/>
<dbReference type="InParanoid" id="Q0III0"/>
<dbReference type="OMA" id="QTVAKEW"/>
<dbReference type="OrthoDB" id="3066195at2759"/>
<dbReference type="Proteomes" id="UP000009136">
    <property type="component" value="Chromosome 8"/>
</dbReference>
<dbReference type="Bgee" id="ENSBTAG00000052146">
    <property type="expression patterns" value="Expressed in oocyte and 99 other cell types or tissues"/>
</dbReference>
<dbReference type="InterPro" id="IPR028002">
    <property type="entry name" value="Myb_DNA-bind_5"/>
</dbReference>
<dbReference type="PANTHER" id="PTHR21632:SF2">
    <property type="entry name" value="MYB_SANT-LIKE DNA-BINDING DOMAIN-CONTAINING PROTEIN 3"/>
    <property type="match status" value="1"/>
</dbReference>
<dbReference type="PANTHER" id="PTHR21632">
    <property type="entry name" value="REGULATORY PROTEIN ZESTE"/>
    <property type="match status" value="1"/>
</dbReference>
<dbReference type="Pfam" id="PF13873">
    <property type="entry name" value="Myb_DNA-bind_5"/>
    <property type="match status" value="1"/>
</dbReference>
<name>MSD3_BOVIN</name>